<proteinExistence type="inferred from homology"/>
<evidence type="ECO:0000250" key="1">
    <source>
        <dbReference type="UniProtKB" id="P04993"/>
    </source>
</evidence>
<evidence type="ECO:0000255" key="2">
    <source>
        <dbReference type="HAMAP-Rule" id="MF_01487"/>
    </source>
</evidence>
<evidence type="ECO:0000269" key="3">
    <source>
    </source>
</evidence>
<evidence type="ECO:0000269" key="4">
    <source>
    </source>
</evidence>
<evidence type="ECO:0000269" key="5">
    <source>
    </source>
</evidence>
<dbReference type="EC" id="5.6.2.3" evidence="2"/>
<dbReference type="EMBL" id="CP000480">
    <property type="protein sequence ID" value="ABK75071.1"/>
    <property type="molecule type" value="Genomic_DNA"/>
</dbReference>
<dbReference type="EMBL" id="CP001663">
    <property type="protein sequence ID" value="AFP37764.1"/>
    <property type="molecule type" value="Genomic_DNA"/>
</dbReference>
<dbReference type="RefSeq" id="WP_011727604.1">
    <property type="nucleotide sequence ID" value="NZ_SIJM01000030.1"/>
</dbReference>
<dbReference type="RefSeq" id="YP_885716.1">
    <property type="nucleotide sequence ID" value="NC_008596.1"/>
</dbReference>
<dbReference type="SMR" id="A0QS28"/>
<dbReference type="STRING" id="246196.MSMEG_1325"/>
<dbReference type="PaxDb" id="246196-MSMEI_1288"/>
<dbReference type="GeneID" id="93456169"/>
<dbReference type="KEGG" id="msb:LJ00_06610"/>
<dbReference type="KEGG" id="msg:MSMEI_1288"/>
<dbReference type="KEGG" id="msm:MSMEG_1325"/>
<dbReference type="PATRIC" id="fig|246196.19.peg.1313"/>
<dbReference type="eggNOG" id="COG0507">
    <property type="taxonomic scope" value="Bacteria"/>
</dbReference>
<dbReference type="OrthoDB" id="9763659at2"/>
<dbReference type="Proteomes" id="UP000000757">
    <property type="component" value="Chromosome"/>
</dbReference>
<dbReference type="Proteomes" id="UP000006158">
    <property type="component" value="Chromosome"/>
</dbReference>
<dbReference type="GO" id="GO:0009338">
    <property type="term" value="C:exodeoxyribonuclease V complex"/>
    <property type="evidence" value="ECO:0007669"/>
    <property type="project" value="InterPro"/>
</dbReference>
<dbReference type="GO" id="GO:0043139">
    <property type="term" value="F:5'-3' DNA helicase activity"/>
    <property type="evidence" value="ECO:0007669"/>
    <property type="project" value="UniProtKB-UniRule"/>
</dbReference>
<dbReference type="GO" id="GO:0005524">
    <property type="term" value="F:ATP binding"/>
    <property type="evidence" value="ECO:0007669"/>
    <property type="project" value="UniProtKB-UniRule"/>
</dbReference>
<dbReference type="GO" id="GO:0016887">
    <property type="term" value="F:ATP hydrolysis activity"/>
    <property type="evidence" value="ECO:0007669"/>
    <property type="project" value="RHEA"/>
</dbReference>
<dbReference type="GO" id="GO:0003677">
    <property type="term" value="F:DNA binding"/>
    <property type="evidence" value="ECO:0007669"/>
    <property type="project" value="UniProtKB-UniRule"/>
</dbReference>
<dbReference type="GO" id="GO:0008854">
    <property type="term" value="F:exodeoxyribonuclease V activity"/>
    <property type="evidence" value="ECO:0007669"/>
    <property type="project" value="UniProtKB-EC"/>
</dbReference>
<dbReference type="GO" id="GO:0017116">
    <property type="term" value="F:single-stranded DNA helicase activity"/>
    <property type="evidence" value="ECO:0007669"/>
    <property type="project" value="TreeGrafter"/>
</dbReference>
<dbReference type="GO" id="GO:0000724">
    <property type="term" value="P:double-strand break repair via homologous recombination"/>
    <property type="evidence" value="ECO:0007669"/>
    <property type="project" value="UniProtKB-UniRule"/>
</dbReference>
<dbReference type="CDD" id="cd17933">
    <property type="entry name" value="DEXSc_RecD-like"/>
    <property type="match status" value="1"/>
</dbReference>
<dbReference type="CDD" id="cd18809">
    <property type="entry name" value="SF1_C_RecD"/>
    <property type="match status" value="1"/>
</dbReference>
<dbReference type="Gene3D" id="3.40.50.300">
    <property type="entry name" value="P-loop containing nucleotide triphosphate hydrolases"/>
    <property type="match status" value="3"/>
</dbReference>
<dbReference type="Gene3D" id="1.10.10.1020">
    <property type="entry name" value="RecBCD complex, subunit RecD, N-terminal domain"/>
    <property type="match status" value="1"/>
</dbReference>
<dbReference type="HAMAP" id="MF_01487">
    <property type="entry name" value="RecD"/>
    <property type="match status" value="1"/>
</dbReference>
<dbReference type="InterPro" id="IPR050534">
    <property type="entry name" value="Coronavir_polyprotein_1ab"/>
</dbReference>
<dbReference type="InterPro" id="IPR027417">
    <property type="entry name" value="P-loop_NTPase"/>
</dbReference>
<dbReference type="InterPro" id="IPR006344">
    <property type="entry name" value="RecD"/>
</dbReference>
<dbReference type="InterPro" id="IPR049550">
    <property type="entry name" value="RecD_N"/>
</dbReference>
<dbReference type="InterPro" id="IPR041851">
    <property type="entry name" value="RecD_N_sf"/>
</dbReference>
<dbReference type="InterPro" id="IPR027785">
    <property type="entry name" value="UvrD-like_helicase_C"/>
</dbReference>
<dbReference type="NCBIfam" id="TIGR01447">
    <property type="entry name" value="recD"/>
    <property type="match status" value="1"/>
</dbReference>
<dbReference type="PANTHER" id="PTHR43788:SF6">
    <property type="entry name" value="DNA HELICASE B"/>
    <property type="match status" value="1"/>
</dbReference>
<dbReference type="PANTHER" id="PTHR43788">
    <property type="entry name" value="DNA2/NAM7 HELICASE FAMILY MEMBER"/>
    <property type="match status" value="1"/>
</dbReference>
<dbReference type="Pfam" id="PF13604">
    <property type="entry name" value="AAA_30"/>
    <property type="match status" value="1"/>
</dbReference>
<dbReference type="Pfam" id="PF21185">
    <property type="entry name" value="RecD_N"/>
    <property type="match status" value="1"/>
</dbReference>
<dbReference type="Pfam" id="PF13538">
    <property type="entry name" value="UvrD_C_2"/>
    <property type="match status" value="1"/>
</dbReference>
<dbReference type="SUPFAM" id="SSF52540">
    <property type="entry name" value="P-loop containing nucleoside triphosphate hydrolases"/>
    <property type="match status" value="1"/>
</dbReference>
<organism>
    <name type="scientific">Mycolicibacterium smegmatis (strain ATCC 700084 / mc(2)155)</name>
    <name type="common">Mycobacterium smegmatis</name>
    <dbReference type="NCBI Taxonomy" id="246196"/>
    <lineage>
        <taxon>Bacteria</taxon>
        <taxon>Bacillati</taxon>
        <taxon>Actinomycetota</taxon>
        <taxon>Actinomycetes</taxon>
        <taxon>Mycobacteriales</taxon>
        <taxon>Mycobacteriaceae</taxon>
        <taxon>Mycolicibacterium</taxon>
    </lineage>
</organism>
<keyword id="KW-0067">ATP-binding</keyword>
<keyword id="KW-0227">DNA damage</keyword>
<keyword id="KW-0234">DNA repair</keyword>
<keyword id="KW-0238">DNA-binding</keyword>
<keyword id="KW-0269">Exonuclease</keyword>
<keyword id="KW-0347">Helicase</keyword>
<keyword id="KW-0378">Hydrolase</keyword>
<keyword id="KW-0413">Isomerase</keyword>
<keyword id="KW-0540">Nuclease</keyword>
<keyword id="KW-0547">Nucleotide-binding</keyword>
<keyword id="KW-1185">Reference proteome</keyword>
<reference key="1">
    <citation type="submission" date="2006-10" db="EMBL/GenBank/DDBJ databases">
        <authorList>
            <person name="Fleischmann R.D."/>
            <person name="Dodson R.J."/>
            <person name="Haft D.H."/>
            <person name="Merkel J.S."/>
            <person name="Nelson W.C."/>
            <person name="Fraser C.M."/>
        </authorList>
    </citation>
    <scope>NUCLEOTIDE SEQUENCE [LARGE SCALE GENOMIC DNA]</scope>
    <source>
        <strain>ATCC 700084 / mc(2)155</strain>
    </source>
</reference>
<reference key="2">
    <citation type="journal article" date="2007" name="Genome Biol.">
        <title>Interrupted coding sequences in Mycobacterium smegmatis: authentic mutations or sequencing errors?</title>
        <authorList>
            <person name="Deshayes C."/>
            <person name="Perrodou E."/>
            <person name="Gallien S."/>
            <person name="Euphrasie D."/>
            <person name="Schaeffer C."/>
            <person name="Van-Dorsselaer A."/>
            <person name="Poch O."/>
            <person name="Lecompte O."/>
            <person name="Reyrat J.-M."/>
        </authorList>
    </citation>
    <scope>NUCLEOTIDE SEQUENCE [LARGE SCALE GENOMIC DNA]</scope>
    <source>
        <strain>ATCC 700084 / mc(2)155</strain>
    </source>
</reference>
<reference key="3">
    <citation type="journal article" date="2009" name="Genome Res.">
        <title>Ortho-proteogenomics: multiple proteomes investigation through orthology and a new MS-based protocol.</title>
        <authorList>
            <person name="Gallien S."/>
            <person name="Perrodou E."/>
            <person name="Carapito C."/>
            <person name="Deshayes C."/>
            <person name="Reyrat J.-M."/>
            <person name="Van Dorsselaer A."/>
            <person name="Poch O."/>
            <person name="Schaeffer C."/>
            <person name="Lecompte O."/>
        </authorList>
    </citation>
    <scope>NUCLEOTIDE SEQUENCE [LARGE SCALE GENOMIC DNA]</scope>
    <source>
        <strain>ATCC 700084 / mc(2)155</strain>
    </source>
</reference>
<reference key="4">
    <citation type="journal article" date="2007" name="J. Bacteriol.">
        <title>Mycobacterial nonhomologous end joining mediates mutagenic repair of chromosomal double-strand DNA breaks.</title>
        <authorList>
            <person name="Stephanou N.C."/>
            <person name="Gao F."/>
            <person name="Bongiorno P."/>
            <person name="Ehrt S."/>
            <person name="Schnappinger D."/>
            <person name="Shuman S."/>
            <person name="Glickman M.S."/>
        </authorList>
    </citation>
    <scope>DISRUPTION PHENOTYPE</scope>
    <source>
        <strain>ATCC 700084 / mc(2)155</strain>
    </source>
</reference>
<reference key="5">
    <citation type="journal article" date="2008" name="Genes Dev.">
        <title>The pathways and outcomes of mycobacterial NHEJ depend on the structure of the broken DNA ends.</title>
        <authorList>
            <person name="Aniukwu J."/>
            <person name="Glickman M.S."/>
            <person name="Shuman S."/>
        </authorList>
    </citation>
    <scope>DISRUPTION PHENOTYPE</scope>
    <source>
        <strain>ATCC 700084 / mc(2)155</strain>
    </source>
</reference>
<reference key="6">
    <citation type="journal article" date="2011" name="Mol. Microbiol.">
        <title>Mycobacteria exploit three genetically distinct DNA double-strand break repair pathways.</title>
        <authorList>
            <person name="Gupta R."/>
            <person name="Barkan D."/>
            <person name="Redelman-Sidi G."/>
            <person name="Shuman S."/>
            <person name="Glickman M.S."/>
        </authorList>
    </citation>
    <scope>FUNCTION</scope>
    <scope>DISRUPTION PHENOTYPE</scope>
    <source>
        <strain>ATCC 700084 / mc(2)155</strain>
    </source>
</reference>
<gene>
    <name evidence="2" type="primary">recD</name>
    <name type="ordered locus">MSMEG_1325</name>
    <name type="ordered locus">MSMEI_1288</name>
</gene>
<feature type="chain" id="PRO_0000425943" description="RecBCD enzyme subunit RecD">
    <location>
        <begin position="1"/>
        <end position="554"/>
    </location>
</feature>
<feature type="binding site" evidence="2">
    <location>
        <begin position="155"/>
        <end position="162"/>
    </location>
    <ligand>
        <name>ATP</name>
        <dbReference type="ChEBI" id="CHEBI:30616"/>
    </ligand>
</feature>
<comment type="function">
    <text evidence="1 5">A helicase/nuclease that prepares dsDNA breaks (DSB) for recombinational DNA repair. Binds to DSBs and unwinds DNA via a highly rapid and processive ATP-dependent bidirectional helicase activity. Holoenzyme degrades any linearized DNA that is unable to undergo homologous recombination. In the holoenzyme this subunit has ssDNA-dependent ATPase and 5'-3' helicase activity. When added to pre-assembled RecBC greatly stimulates nuclease activity and augments holoenzyme processivity (By similarity). Unlike the case in E.coli, suppresses RecA-dependent homologous recombination, is instead required for single-strand annealing pathway repair of DSB (PubMed:21219454).</text>
</comment>
<comment type="catalytic activity">
    <reaction evidence="2">
        <text>Couples ATP hydrolysis with the unwinding of duplex DNA at the replication fork by translocating in the 5'-3' direction. This creates two antiparallel DNA single strands (ssDNA). The leading ssDNA polymer is the template for DNA polymerase III holoenzyme which synthesizes a continuous strand.</text>
        <dbReference type="EC" id="5.6.2.3"/>
    </reaction>
</comment>
<comment type="catalytic activity">
    <reaction evidence="2">
        <text>ATP + H2O = ADP + phosphate + H(+)</text>
        <dbReference type="Rhea" id="RHEA:13065"/>
        <dbReference type="ChEBI" id="CHEBI:15377"/>
        <dbReference type="ChEBI" id="CHEBI:15378"/>
        <dbReference type="ChEBI" id="CHEBI:30616"/>
        <dbReference type="ChEBI" id="CHEBI:43474"/>
        <dbReference type="ChEBI" id="CHEBI:456216"/>
        <dbReference type="EC" id="5.6.2.3"/>
    </reaction>
</comment>
<comment type="subunit">
    <text evidence="2">Heterotrimer of RecB, RecC and RecD. All subunits contribute to DNA-binding.</text>
</comment>
<comment type="disruption phenotype">
    <text evidence="3 4 5">Unlike E.coli, triple recB-recC-recD deletion is no more sensitive to DNA damaging agents (UV light sensitivity, mitomycin C, methyl methanesulphonate or ionizing radiation) than wild-type; has reduced resistance to H(2)O(2) which is exacerbated by further adnA-adnB deletion. Triple mutants have no effect on homologous recombination or on NHEJ of blunt-end, 5'- or 3'-overhang DSBs or on incompatible 3'-chromosomal overhangs. However the triple mutant disrupts all single-strand annealing repair of DSB.</text>
</comment>
<comment type="miscellaneous">
    <text evidence="2">In the RecBCD complex, RecB has a slow 3'-5' helicase, an exonuclease activity and loads RecA onto ssDNA, RecD has a fast 5'-3' helicase activity, while RecC stimulates the ATPase and processivity of the RecB helicase and contributes to recognition of the Chi site.</text>
</comment>
<comment type="similarity">
    <text evidence="2">Belongs to the RecD family.</text>
</comment>
<sequence>MSLLEAFAEILEPADVHVAQRLTVLADEPDASVELAVALAVRALRGGSVCVDLRSVAGQVELPDLPWPDPDAWLAALAASPLLGQPPVLRLFGDLLYLDRYWLEEQQVCDDVLALVSARPGGAVPDVSRLFGAGFEEQRAAAKVALSQGLTVLTGGPGTGKTTTVARLLALLAEQAALAGKPSPRIALAAPTGKAAARLQEAVQLEIDQLDLIERRRLTGLHATTLHRLLGPRPDTSSRFRHHRANRLPHDVIVVDETSMVSLTMMARLLEAVRPQTRLVLVGDPDQLASVEAGAVLADLVEGLGSRGVAELKTSHRFGESIGALASAIRTGDADAALAVLAAGGEHIEWVHEDPVEQLREVVVPHAMRLRQAAILGDQREALATLDEHRLLCAHRRGPAGVDHWNRQVQRWLGEETGEPLWGSWYVGRPILVTANDYGLKLYNGDTGVVVATPDGMRAVIGDAGTFATGRLTDVETMHAMTIHKSQGSQADEVTVLLPSEDSRLLTRELFYTAVTRAKTRVRVVGAEAEVRAAIERQAVRATGLRKRLRPAGV</sequence>
<name>RECD_MYCS2</name>
<accession>A0QS28</accession>
<protein>
    <recommendedName>
        <fullName evidence="2">RecBCD enzyme subunit RecD</fullName>
        <ecNumber evidence="2">5.6.2.3</ecNumber>
    </recommendedName>
    <alternativeName>
        <fullName evidence="2">DNA 5'-3' helicase subunit RecB</fullName>
    </alternativeName>
    <alternativeName>
        <fullName evidence="2">Exonuclease V subunit RecD</fullName>
        <shortName evidence="2">ExoV subunit RecD</shortName>
    </alternativeName>
    <alternativeName>
        <fullName evidence="2">Helicase/nuclease RecBCD subunit RecD</fullName>
    </alternativeName>
</protein>